<protein>
    <recommendedName>
        <fullName>Probable methyltransferase EP424R</fullName>
        <shortName>pEP424R</shortName>
        <ecNumber>2.1.1.-</ecNumber>
    </recommendedName>
</protein>
<keyword id="KW-0244">Early protein</keyword>
<keyword id="KW-0489">Methyltransferase</keyword>
<keyword id="KW-0949">S-adenosyl-L-methionine</keyword>
<keyword id="KW-0808">Transferase</keyword>
<keyword id="KW-0946">Virion</keyword>
<name>VF424_ASFP4</name>
<feature type="chain" id="PRO_0000373068" description="Probable methyltransferase EP424R">
    <location>
        <begin position="1"/>
        <end position="424"/>
    </location>
</feature>
<feature type="domain" description="Adrift-type SAM-dependent 2'-O-MTase" evidence="2">
    <location>
        <begin position="103"/>
        <end position="315"/>
    </location>
</feature>
<feature type="active site" description="Proton acceptor" evidence="2">
    <location>
        <position position="268"/>
    </location>
</feature>
<feature type="binding site" evidence="2">
    <location>
        <position position="135"/>
    </location>
    <ligand>
        <name>S-adenosyl-L-methionine</name>
        <dbReference type="ChEBI" id="CHEBI:59789"/>
    </ligand>
</feature>
<feature type="binding site" evidence="2">
    <location>
        <position position="228"/>
    </location>
    <ligand>
        <name>S-adenosyl-L-methionine</name>
        <dbReference type="ChEBI" id="CHEBI:59789"/>
    </ligand>
</feature>
<gene>
    <name type="ordered locus">Pret-067</name>
</gene>
<organismHost>
    <name type="scientific">Ornithodoros</name>
    <name type="common">relapsing fever ticks</name>
    <dbReference type="NCBI Taxonomy" id="6937"/>
</organismHost>
<organismHost>
    <name type="scientific">Phacochoerus aethiopicus</name>
    <name type="common">Warthog</name>
    <dbReference type="NCBI Taxonomy" id="85517"/>
</organismHost>
<organismHost>
    <name type="scientific">Phacochoerus africanus</name>
    <name type="common">Warthog</name>
    <dbReference type="NCBI Taxonomy" id="41426"/>
</organismHost>
<organismHost>
    <name type="scientific">Potamochoerus larvatus</name>
    <name type="common">Bushpig</name>
    <dbReference type="NCBI Taxonomy" id="273792"/>
</organismHost>
<organismHost>
    <name type="scientific">Sus scrofa</name>
    <name type="common">Pig</name>
    <dbReference type="NCBI Taxonomy" id="9823"/>
</organismHost>
<accession>P0C969</accession>
<sequence>MSNYYYYYGGGRYDWLKTVEPTNFLKIGLPYQAHPLHLQHQATTPPSILEKFKRADILLNEVKAEMDPLMLQPETEKKLFQILSSIDMFKGLRKKVEFTYNAQIVTNAWLKMYELLNTMNFNNTSQAFCNCELPGGFISAINHFNYTMMHYPTFNWVASSLYPSSETDALEDHYGLYQCNPDNWLMQSPLLKKNMDYNNGDVTIASNVKNLALRATQRLTPIHLYTADGGINVGHDYNKQEELNLKLHFGQALTGLLSLSKGGNMILKHYTLNHAFTLSLICVFSHFFEELYITKPTSSRPTNSETYIVGKNRLRLFTPKEEQVLLKRLEFFNDTPLVDLSLYQNLLESVYFAVETIHLKQQIEFLNFGMKCYRHFYNKIKLLNDYLAPKKKIFQDRWRVLNKLYVLEKKHKLKLCAASQGSVA</sequence>
<dbReference type="EC" id="2.1.1.-"/>
<dbReference type="EMBL" id="AY261363">
    <property type="status" value="NOT_ANNOTATED_CDS"/>
    <property type="molecule type" value="Genomic_DNA"/>
</dbReference>
<dbReference type="SMR" id="P0C969"/>
<dbReference type="Proteomes" id="UP000000859">
    <property type="component" value="Segment"/>
</dbReference>
<dbReference type="GO" id="GO:0044423">
    <property type="term" value="C:virion component"/>
    <property type="evidence" value="ECO:0007669"/>
    <property type="project" value="UniProtKB-KW"/>
</dbReference>
<dbReference type="GO" id="GO:0004483">
    <property type="term" value="F:mRNA (nucleoside-2'-O-)-methyltransferase activity"/>
    <property type="evidence" value="ECO:0007669"/>
    <property type="project" value="UniProtKB-ARBA"/>
</dbReference>
<dbReference type="GO" id="GO:0006370">
    <property type="term" value="P:7-methylguanosine mRNA capping"/>
    <property type="evidence" value="ECO:0007669"/>
    <property type="project" value="TreeGrafter"/>
</dbReference>
<dbReference type="GO" id="GO:0032259">
    <property type="term" value="P:methylation"/>
    <property type="evidence" value="ECO:0007669"/>
    <property type="project" value="UniProtKB-KW"/>
</dbReference>
<dbReference type="Gene3D" id="3.40.50.12760">
    <property type="match status" value="1"/>
</dbReference>
<dbReference type="InterPro" id="IPR025807">
    <property type="entry name" value="Adrift-typ_MeTrfase"/>
</dbReference>
<dbReference type="InterPro" id="IPR050851">
    <property type="entry name" value="mRNA_Cap_2O-Ribose_MeTrfase"/>
</dbReference>
<dbReference type="InterPro" id="IPR002877">
    <property type="entry name" value="RNA_MeTrfase_FtsJ_dom"/>
</dbReference>
<dbReference type="InterPro" id="IPR029063">
    <property type="entry name" value="SAM-dependent_MTases_sf"/>
</dbReference>
<dbReference type="PANTHER" id="PTHR16121">
    <property type="entry name" value="CAP-SPECIFIC MRNA (NUCLEOSIDE-2'-O-)-METHYLTRANSFERASE 1-RELATED"/>
    <property type="match status" value="1"/>
</dbReference>
<dbReference type="Pfam" id="PF01728">
    <property type="entry name" value="FtsJ"/>
    <property type="match status" value="1"/>
</dbReference>
<dbReference type="SUPFAM" id="SSF53335">
    <property type="entry name" value="S-adenosyl-L-methionine-dependent methyltransferases"/>
    <property type="match status" value="1"/>
</dbReference>
<dbReference type="PROSITE" id="PS51614">
    <property type="entry name" value="SAM_MT_ADRIFT"/>
    <property type="match status" value="1"/>
</dbReference>
<comment type="subcellular location">
    <subcellularLocation>
        <location evidence="1">Virion</location>
    </subcellularLocation>
</comment>
<comment type="induction">
    <text evidence="3">Expressed in the early phase of the viral replicative cycle.</text>
</comment>
<reference key="1">
    <citation type="submission" date="2003-03" db="EMBL/GenBank/DDBJ databases">
        <title>African swine fever virus genomes.</title>
        <authorList>
            <person name="Kutish G.F."/>
            <person name="Rock D.L."/>
        </authorList>
    </citation>
    <scope>NUCLEOTIDE SEQUENCE [LARGE SCALE GENOMIC DNA]</scope>
</reference>
<evidence type="ECO:0000250" key="1">
    <source>
        <dbReference type="UniProtKB" id="Q65148"/>
    </source>
</evidence>
<evidence type="ECO:0000255" key="2">
    <source>
        <dbReference type="PROSITE-ProRule" id="PRU00946"/>
    </source>
</evidence>
<evidence type="ECO:0000305" key="3"/>
<organism>
    <name type="scientific">African swine fever virus (isolate Tick/South Africa/Pretoriuskop Pr4/1996)</name>
    <name type="common">ASFV</name>
    <dbReference type="NCBI Taxonomy" id="561443"/>
    <lineage>
        <taxon>Viruses</taxon>
        <taxon>Varidnaviria</taxon>
        <taxon>Bamfordvirae</taxon>
        <taxon>Nucleocytoviricota</taxon>
        <taxon>Pokkesviricetes</taxon>
        <taxon>Asfuvirales</taxon>
        <taxon>Asfarviridae</taxon>
        <taxon>Asfivirus</taxon>
        <taxon>African swine fever virus</taxon>
    </lineage>
</organism>
<proteinExistence type="inferred from homology"/>